<proteinExistence type="evidence at protein level"/>
<reference key="1">
    <citation type="journal article" date="1995" name="Biochem. Biophys. Res. Commun.">
        <title>Sequence analysis of frog rho-crystallin by cDNA cloning and sequencing: a member of the aldo-keto reductase family.</title>
        <authorList>
            <person name="Lu S.F."/>
            <person name="Pan F.M."/>
            <person name="Chiou S.H."/>
        </authorList>
    </citation>
    <scope>NUCLEOTIDE SEQUENCE [MRNA]</scope>
    <source>
        <tissue>Lens</tissue>
    </source>
</reference>
<reference key="2">
    <citation type="journal article" date="1990" name="J. Biol. Chem.">
        <title>Purification and characterization of rho-crystallin from Japanese common bullfrog lens.</title>
        <authorList>
            <person name="Fujii Y."/>
            <person name="Watanabe K."/>
            <person name="Hayashi H."/>
            <person name="Urade Y."/>
            <person name="Kuramitsu S."/>
            <person name="Kagamiyama H."/>
            <person name="Hayaishi O."/>
        </authorList>
    </citation>
    <scope>PROTEIN SEQUENCE OF 2-324</scope>
    <scope>ACETYLATION AT THR-2</scope>
    <source>
        <tissue>Lens</tissue>
    </source>
</reference>
<comment type="subunit">
    <text>Monomer.</text>
</comment>
<comment type="similarity">
    <text evidence="3">Belongs to the aldo/keto reductase family.</text>
</comment>
<sequence>MTLTKETRVTLNDGNMMPILGLGTYAAPDVPKSLAEEAVKTAIDVGYRHIDCAFITGNEMHIGNGIRSKISDGTVKREDIFYTGKLWCTYFSPDMVRKGLERSLRDVGMDYLDLFLMHWPVSLKPSGASDPSDKDKPFIYDNVDLCATWEALEARKDAGLVRSLGVSNFNRRQLERILNKPGLKYKPVCNQVECHVYLNQNKLHSYCKSKDIVLVTYSVLGSHRDRNWVDLSLPVLLDDPILNKIAAKYNRTSAEVAMRFILQKGIVVLAKSFTPARIKQNLGVFEFELKPEDMKTLESLDRNLHYGPFREVKQHPEYPFHDEY</sequence>
<protein>
    <recommendedName>
        <fullName>Rho crystallin</fullName>
    </recommendedName>
</protein>
<keyword id="KW-0007">Acetylation</keyword>
<keyword id="KW-0903">Direct protein sequencing</keyword>
<keyword id="KW-0273">Eye lens protein</keyword>
<organism>
    <name type="scientific">Aquarana catesbeiana</name>
    <name type="common">American bullfrog</name>
    <name type="synonym">Rana catesbeiana</name>
    <dbReference type="NCBI Taxonomy" id="8400"/>
    <lineage>
        <taxon>Eukaryota</taxon>
        <taxon>Metazoa</taxon>
        <taxon>Chordata</taxon>
        <taxon>Craniata</taxon>
        <taxon>Vertebrata</taxon>
        <taxon>Euteleostomi</taxon>
        <taxon>Amphibia</taxon>
        <taxon>Batrachia</taxon>
        <taxon>Anura</taxon>
        <taxon>Neobatrachia</taxon>
        <taxon>Ranoidea</taxon>
        <taxon>Ranidae</taxon>
        <taxon>Aquarana</taxon>
    </lineage>
</organism>
<dbReference type="EMBL" id="X87724">
    <property type="protein sequence ID" value="CAA61023.1"/>
    <property type="molecule type" value="mRNA"/>
</dbReference>
<dbReference type="PIR" id="JC4280">
    <property type="entry name" value="JC4280"/>
</dbReference>
<dbReference type="SMR" id="P17264"/>
<dbReference type="iPTMnet" id="P17264"/>
<dbReference type="GO" id="GO:0016491">
    <property type="term" value="F:oxidoreductase activity"/>
    <property type="evidence" value="ECO:0007669"/>
    <property type="project" value="InterPro"/>
</dbReference>
<dbReference type="GO" id="GO:0005212">
    <property type="term" value="F:structural constituent of eye lens"/>
    <property type="evidence" value="ECO:0007669"/>
    <property type="project" value="UniProtKB-KW"/>
</dbReference>
<dbReference type="CDD" id="cd19108">
    <property type="entry name" value="AKR_AKR1C1-35"/>
    <property type="match status" value="1"/>
</dbReference>
<dbReference type="FunFam" id="3.20.20.100:FF:000003">
    <property type="entry name" value="Aldo-keto reductase family 1 member C3"/>
    <property type="match status" value="1"/>
</dbReference>
<dbReference type="Gene3D" id="3.20.20.100">
    <property type="entry name" value="NADP-dependent oxidoreductase domain"/>
    <property type="match status" value="1"/>
</dbReference>
<dbReference type="InterPro" id="IPR020471">
    <property type="entry name" value="AKR"/>
</dbReference>
<dbReference type="InterPro" id="IPR044482">
    <property type="entry name" value="AKR1C"/>
</dbReference>
<dbReference type="InterPro" id="IPR018170">
    <property type="entry name" value="Aldo/ket_reductase_CS"/>
</dbReference>
<dbReference type="InterPro" id="IPR023210">
    <property type="entry name" value="NADP_OxRdtase_dom"/>
</dbReference>
<dbReference type="InterPro" id="IPR036812">
    <property type="entry name" value="NADP_OxRdtase_dom_sf"/>
</dbReference>
<dbReference type="PANTHER" id="PTHR11732">
    <property type="entry name" value="ALDO/KETO REDUCTASE"/>
    <property type="match status" value="1"/>
</dbReference>
<dbReference type="Pfam" id="PF00248">
    <property type="entry name" value="Aldo_ket_red"/>
    <property type="match status" value="1"/>
</dbReference>
<dbReference type="PIRSF" id="PIRSF000097">
    <property type="entry name" value="AKR"/>
    <property type="match status" value="1"/>
</dbReference>
<dbReference type="PRINTS" id="PR00069">
    <property type="entry name" value="ALDKETRDTASE"/>
</dbReference>
<dbReference type="SUPFAM" id="SSF51430">
    <property type="entry name" value="NAD(P)-linked oxidoreductase"/>
    <property type="match status" value="1"/>
</dbReference>
<dbReference type="PROSITE" id="PS00798">
    <property type="entry name" value="ALDOKETO_REDUCTASE_1"/>
    <property type="match status" value="1"/>
</dbReference>
<dbReference type="PROSITE" id="PS00062">
    <property type="entry name" value="ALDOKETO_REDUCTASE_2"/>
    <property type="match status" value="1"/>
</dbReference>
<dbReference type="PROSITE" id="PS00063">
    <property type="entry name" value="ALDOKETO_REDUCTASE_3"/>
    <property type="match status" value="1"/>
</dbReference>
<name>CRO_AQUCT</name>
<evidence type="ECO:0000250" key="1"/>
<evidence type="ECO:0000269" key="2">
    <source>
    </source>
</evidence>
<evidence type="ECO:0000305" key="3"/>
<feature type="initiator methionine" description="Removed" evidence="2">
    <location>
        <position position="1"/>
    </location>
</feature>
<feature type="chain" id="PRO_0000124613" description="Rho crystallin">
    <location>
        <begin position="2"/>
        <end position="324"/>
    </location>
</feature>
<feature type="binding site" evidence="1">
    <location>
        <begin position="218"/>
        <end position="281"/>
    </location>
    <ligand>
        <name>NADP(+)</name>
        <dbReference type="ChEBI" id="CHEBI:58349"/>
    </ligand>
</feature>
<feature type="modified residue" description="N-acetylthreonine" evidence="2">
    <location>
        <position position="2"/>
    </location>
</feature>
<feature type="sequence conflict" description="In Ref. 1; CAA61023." evidence="3" ref="1">
    <original>K</original>
    <variation>E</variation>
    <location>
        <position position="76"/>
    </location>
</feature>
<feature type="sequence conflict" description="In Ref. 1; CAA61023." evidence="3" ref="1">
    <original>R</original>
    <variation>C</variation>
    <location>
        <position position="155"/>
    </location>
</feature>
<feature type="sequence conflict" description="In Ref. 1; CAA61023." evidence="3" ref="1">
    <original>S</original>
    <variation>A</variation>
    <location>
        <position position="205"/>
    </location>
</feature>
<feature type="sequence conflict" description="In Ref. 1; CAA61023." evidence="3" ref="1">
    <original>T</original>
    <variation>A</variation>
    <location>
        <position position="216"/>
    </location>
</feature>
<feature type="sequence conflict" description="In Ref. 1; CAA61023." evidence="3" ref="1">
    <original>P</original>
    <variation>A</variation>
    <location>
        <position position="234"/>
    </location>
</feature>
<feature type="sequence conflict" description="In Ref. 1; CAA61023." evidence="3" ref="1">
    <original>T</original>
    <variation>S</variation>
    <location>
        <position position="252"/>
    </location>
</feature>
<accession>P17264</accession>